<protein>
    <recommendedName>
        <fullName evidence="1">Alanine--tRNA ligase</fullName>
        <ecNumber evidence="1">6.1.1.7</ecNumber>
    </recommendedName>
    <alternativeName>
        <fullName evidence="1">Alanyl-tRNA synthetase</fullName>
        <shortName evidence="1">AlaRS</shortName>
    </alternativeName>
</protein>
<comment type="function">
    <text evidence="1">Catalyzes the attachment of alanine to tRNA(Ala) in a two-step reaction: alanine is first activated by ATP to form Ala-AMP and then transferred to the acceptor end of tRNA(Ala). Also edits incorrectly charged Ser-tRNA(Ala) and Gly-tRNA(Ala) via its editing domain.</text>
</comment>
<comment type="catalytic activity">
    <reaction evidence="1">
        <text>tRNA(Ala) + L-alanine + ATP = L-alanyl-tRNA(Ala) + AMP + diphosphate</text>
        <dbReference type="Rhea" id="RHEA:12540"/>
        <dbReference type="Rhea" id="RHEA-COMP:9657"/>
        <dbReference type="Rhea" id="RHEA-COMP:9923"/>
        <dbReference type="ChEBI" id="CHEBI:30616"/>
        <dbReference type="ChEBI" id="CHEBI:33019"/>
        <dbReference type="ChEBI" id="CHEBI:57972"/>
        <dbReference type="ChEBI" id="CHEBI:78442"/>
        <dbReference type="ChEBI" id="CHEBI:78497"/>
        <dbReference type="ChEBI" id="CHEBI:456215"/>
        <dbReference type="EC" id="6.1.1.7"/>
    </reaction>
</comment>
<comment type="cofactor">
    <cofactor evidence="1">
        <name>Zn(2+)</name>
        <dbReference type="ChEBI" id="CHEBI:29105"/>
    </cofactor>
    <text evidence="1">Binds 1 zinc ion per subunit.</text>
</comment>
<comment type="subcellular location">
    <subcellularLocation>
        <location evidence="1">Cytoplasm</location>
    </subcellularLocation>
</comment>
<comment type="domain">
    <text evidence="1">Consists of three domains; the N-terminal catalytic domain, the editing domain and the C-terminal C-Ala domain. The editing domain removes incorrectly charged amino acids, while the C-Ala domain, along with tRNA(Ala), serves as a bridge to cooperatively bring together the editing and aminoacylation centers thus stimulating deacylation of misacylated tRNAs.</text>
</comment>
<comment type="similarity">
    <text evidence="1">Belongs to the class-II aminoacyl-tRNA synthetase family.</text>
</comment>
<gene>
    <name evidence="1" type="primary">alaS</name>
    <name type="ordered locus">Noc_0926</name>
</gene>
<organism>
    <name type="scientific">Nitrosococcus oceani (strain ATCC 19707 / BCRC 17464 / JCM 30415 / NCIMB 11848 / C-107)</name>
    <dbReference type="NCBI Taxonomy" id="323261"/>
    <lineage>
        <taxon>Bacteria</taxon>
        <taxon>Pseudomonadati</taxon>
        <taxon>Pseudomonadota</taxon>
        <taxon>Gammaproteobacteria</taxon>
        <taxon>Chromatiales</taxon>
        <taxon>Chromatiaceae</taxon>
        <taxon>Nitrosococcus</taxon>
    </lineage>
</organism>
<reference key="1">
    <citation type="journal article" date="2006" name="Appl. Environ. Microbiol.">
        <title>Complete genome sequence of the marine, chemolithoautotrophic, ammonia-oxidizing bacterium Nitrosococcus oceani ATCC 19707.</title>
        <authorList>
            <person name="Klotz M.G."/>
            <person name="Arp D.J."/>
            <person name="Chain P.S.G."/>
            <person name="El-Sheikh A.F."/>
            <person name="Hauser L.J."/>
            <person name="Hommes N.G."/>
            <person name="Larimer F.W."/>
            <person name="Malfatti S.A."/>
            <person name="Norton J.M."/>
            <person name="Poret-Peterson A.T."/>
            <person name="Vergez L.M."/>
            <person name="Ward B.B."/>
        </authorList>
    </citation>
    <scope>NUCLEOTIDE SEQUENCE [LARGE SCALE GENOMIC DNA]</scope>
    <source>
        <strain>ATCC 19707 / BCRC 17464 / JCM 30415 / NCIMB 11848 / C-107</strain>
    </source>
</reference>
<evidence type="ECO:0000255" key="1">
    <source>
        <dbReference type="HAMAP-Rule" id="MF_00036"/>
    </source>
</evidence>
<proteinExistence type="inferred from homology"/>
<sequence>MKSSAELRKIFLDYFRHQSHEIVPSGPLVPANDPTLLFTNAGMVQFKEVFLGREVRAYHRAASAQRCVRAGGKHNDLENVGYTARHHTFFEMLGNFSFGDYFKREAIGYAWELLTEVLKLPPERLWVTVFKEDDEAANIWLQEIGVSPERFSRCGAEDNFWSMGETGPCGPCSEIFYDHGPEIEGGPPGSPEQEGDRYTEIWNLVFMQYDRGKEGRLSPLPRPSVDTGMGLERLAAVMQGVHDNYNIDLFRNLIAAITALSGIQNQEQTSLRVIADHIRSCVFLIVDGIQPSNEGRGYVLRRIIRRAIRHGHKLGLRDPFFYRLVEPLVQEMGEAYPELFRLQSQVERVLKLEEERFNETLEQGLKILEQDIIDLSDAVIPGETIFRLYDTFGFPVDLTADIARERKLTLDMKGFEQAMAKQRKRARAASRFKIEYGSELQMDLETEFTGYEQLRGEGQIAALFRLAETMETVEQLSAGESGMVVLDRTPFYAEAGGQVGDRGTLRGSNGLFNVTDTHKQGAAHVHLGEVRLGQLRVGDSIQSEVDRKYRTPTRLNHSATHLLHAALREVLGEGVIQKGSLVASDRLRFDFSHLEAVQSGQLRQIEHLVNAKIRANLPVETQIMPLQQALDAGVMALFGEKYGEQVRVLRMGDFSMELCGGTHVDRTGDIGLFKIINEMGVAAGIRRIEAVTGEAALSWVEEGEVCLEALMGRLKASRNSAVDKLEQLQQQTRQQEKELQRLKAKLATTGGADLSIQAQEIRGIKVLAARIDGVDSKTLRATVDQLKGKLITAAVVLGTVVEDKVVLIAGVTNNATSRIKAGDLVNFVAEQVGGRGGGRPDMAQAGGRNPDKLDAALDLVPKWVEGQLTSGAQ</sequence>
<feature type="chain" id="PRO_0000347700" description="Alanine--tRNA ligase">
    <location>
        <begin position="1"/>
        <end position="873"/>
    </location>
</feature>
<feature type="binding site" evidence="1">
    <location>
        <position position="557"/>
    </location>
    <ligand>
        <name>Zn(2+)</name>
        <dbReference type="ChEBI" id="CHEBI:29105"/>
    </ligand>
</feature>
<feature type="binding site" evidence="1">
    <location>
        <position position="561"/>
    </location>
    <ligand>
        <name>Zn(2+)</name>
        <dbReference type="ChEBI" id="CHEBI:29105"/>
    </ligand>
</feature>
<feature type="binding site" evidence="1">
    <location>
        <position position="659"/>
    </location>
    <ligand>
        <name>Zn(2+)</name>
        <dbReference type="ChEBI" id="CHEBI:29105"/>
    </ligand>
</feature>
<feature type="binding site" evidence="1">
    <location>
        <position position="663"/>
    </location>
    <ligand>
        <name>Zn(2+)</name>
        <dbReference type="ChEBI" id="CHEBI:29105"/>
    </ligand>
</feature>
<dbReference type="EC" id="6.1.1.7" evidence="1"/>
<dbReference type="EMBL" id="CP000127">
    <property type="protein sequence ID" value="ABA57438.1"/>
    <property type="molecule type" value="Genomic_DNA"/>
</dbReference>
<dbReference type="RefSeq" id="WP_002809851.1">
    <property type="nucleotide sequence ID" value="NC_007484.1"/>
</dbReference>
<dbReference type="SMR" id="Q3JCK8"/>
<dbReference type="FunCoup" id="Q3JCK8">
    <property type="interactions" value="583"/>
</dbReference>
<dbReference type="STRING" id="323261.Noc_0926"/>
<dbReference type="KEGG" id="noc:Noc_0926"/>
<dbReference type="eggNOG" id="COG0013">
    <property type="taxonomic scope" value="Bacteria"/>
</dbReference>
<dbReference type="HOGENOM" id="CLU_004485_1_1_6"/>
<dbReference type="InParanoid" id="Q3JCK8"/>
<dbReference type="Proteomes" id="UP000006838">
    <property type="component" value="Chromosome"/>
</dbReference>
<dbReference type="GO" id="GO:0005829">
    <property type="term" value="C:cytosol"/>
    <property type="evidence" value="ECO:0007669"/>
    <property type="project" value="TreeGrafter"/>
</dbReference>
<dbReference type="GO" id="GO:0004813">
    <property type="term" value="F:alanine-tRNA ligase activity"/>
    <property type="evidence" value="ECO:0007669"/>
    <property type="project" value="UniProtKB-UniRule"/>
</dbReference>
<dbReference type="GO" id="GO:0002161">
    <property type="term" value="F:aminoacyl-tRNA deacylase activity"/>
    <property type="evidence" value="ECO:0007669"/>
    <property type="project" value="TreeGrafter"/>
</dbReference>
<dbReference type="GO" id="GO:0005524">
    <property type="term" value="F:ATP binding"/>
    <property type="evidence" value="ECO:0007669"/>
    <property type="project" value="UniProtKB-UniRule"/>
</dbReference>
<dbReference type="GO" id="GO:0000049">
    <property type="term" value="F:tRNA binding"/>
    <property type="evidence" value="ECO:0007669"/>
    <property type="project" value="UniProtKB-KW"/>
</dbReference>
<dbReference type="GO" id="GO:0008270">
    <property type="term" value="F:zinc ion binding"/>
    <property type="evidence" value="ECO:0007669"/>
    <property type="project" value="UniProtKB-UniRule"/>
</dbReference>
<dbReference type="GO" id="GO:0006419">
    <property type="term" value="P:alanyl-tRNA aminoacylation"/>
    <property type="evidence" value="ECO:0007669"/>
    <property type="project" value="UniProtKB-UniRule"/>
</dbReference>
<dbReference type="GO" id="GO:0045892">
    <property type="term" value="P:negative regulation of DNA-templated transcription"/>
    <property type="evidence" value="ECO:0007669"/>
    <property type="project" value="TreeGrafter"/>
</dbReference>
<dbReference type="CDD" id="cd00673">
    <property type="entry name" value="AlaRS_core"/>
    <property type="match status" value="1"/>
</dbReference>
<dbReference type="FunFam" id="2.40.30.130:FF:000001">
    <property type="entry name" value="Alanine--tRNA ligase"/>
    <property type="match status" value="1"/>
</dbReference>
<dbReference type="FunFam" id="3.10.310.40:FF:000001">
    <property type="entry name" value="Alanine--tRNA ligase"/>
    <property type="match status" value="1"/>
</dbReference>
<dbReference type="FunFam" id="3.30.54.20:FF:000001">
    <property type="entry name" value="Alanine--tRNA ligase"/>
    <property type="match status" value="1"/>
</dbReference>
<dbReference type="FunFam" id="3.30.930.10:FF:000004">
    <property type="entry name" value="Alanine--tRNA ligase"/>
    <property type="match status" value="1"/>
</dbReference>
<dbReference type="FunFam" id="3.30.980.10:FF:000004">
    <property type="entry name" value="Alanine--tRNA ligase, cytoplasmic"/>
    <property type="match status" value="1"/>
</dbReference>
<dbReference type="Gene3D" id="2.40.30.130">
    <property type="match status" value="1"/>
</dbReference>
<dbReference type="Gene3D" id="3.10.310.40">
    <property type="match status" value="1"/>
</dbReference>
<dbReference type="Gene3D" id="3.30.54.20">
    <property type="match status" value="1"/>
</dbReference>
<dbReference type="Gene3D" id="6.10.250.550">
    <property type="match status" value="1"/>
</dbReference>
<dbReference type="Gene3D" id="3.30.930.10">
    <property type="entry name" value="Bira Bifunctional Protein, Domain 2"/>
    <property type="match status" value="1"/>
</dbReference>
<dbReference type="Gene3D" id="3.30.980.10">
    <property type="entry name" value="Threonyl-trna Synthetase, Chain A, domain 2"/>
    <property type="match status" value="1"/>
</dbReference>
<dbReference type="HAMAP" id="MF_00036_B">
    <property type="entry name" value="Ala_tRNA_synth_B"/>
    <property type="match status" value="1"/>
</dbReference>
<dbReference type="InterPro" id="IPR045864">
    <property type="entry name" value="aa-tRNA-synth_II/BPL/LPL"/>
</dbReference>
<dbReference type="InterPro" id="IPR002318">
    <property type="entry name" value="Ala-tRNA-lgiase_IIc"/>
</dbReference>
<dbReference type="InterPro" id="IPR018162">
    <property type="entry name" value="Ala-tRNA-ligase_IIc_anticod-bd"/>
</dbReference>
<dbReference type="InterPro" id="IPR018165">
    <property type="entry name" value="Ala-tRNA-synth_IIc_core"/>
</dbReference>
<dbReference type="InterPro" id="IPR018164">
    <property type="entry name" value="Ala-tRNA-synth_IIc_N"/>
</dbReference>
<dbReference type="InterPro" id="IPR050058">
    <property type="entry name" value="Ala-tRNA_ligase"/>
</dbReference>
<dbReference type="InterPro" id="IPR023033">
    <property type="entry name" value="Ala_tRNA_ligase_euk/bac"/>
</dbReference>
<dbReference type="InterPro" id="IPR003156">
    <property type="entry name" value="DHHA1_dom"/>
</dbReference>
<dbReference type="InterPro" id="IPR018163">
    <property type="entry name" value="Thr/Ala-tRNA-synth_IIc_edit"/>
</dbReference>
<dbReference type="InterPro" id="IPR009000">
    <property type="entry name" value="Transl_B-barrel_sf"/>
</dbReference>
<dbReference type="InterPro" id="IPR012947">
    <property type="entry name" value="tRNA_SAD"/>
</dbReference>
<dbReference type="NCBIfam" id="TIGR00344">
    <property type="entry name" value="alaS"/>
    <property type="match status" value="1"/>
</dbReference>
<dbReference type="PANTHER" id="PTHR11777:SF9">
    <property type="entry name" value="ALANINE--TRNA LIGASE, CYTOPLASMIC"/>
    <property type="match status" value="1"/>
</dbReference>
<dbReference type="PANTHER" id="PTHR11777">
    <property type="entry name" value="ALANYL-TRNA SYNTHETASE"/>
    <property type="match status" value="1"/>
</dbReference>
<dbReference type="Pfam" id="PF02272">
    <property type="entry name" value="DHHA1"/>
    <property type="match status" value="1"/>
</dbReference>
<dbReference type="Pfam" id="PF01411">
    <property type="entry name" value="tRNA-synt_2c"/>
    <property type="match status" value="1"/>
</dbReference>
<dbReference type="Pfam" id="PF07973">
    <property type="entry name" value="tRNA_SAD"/>
    <property type="match status" value="1"/>
</dbReference>
<dbReference type="PRINTS" id="PR00980">
    <property type="entry name" value="TRNASYNTHALA"/>
</dbReference>
<dbReference type="SMART" id="SM00863">
    <property type="entry name" value="tRNA_SAD"/>
    <property type="match status" value="1"/>
</dbReference>
<dbReference type="SUPFAM" id="SSF55681">
    <property type="entry name" value="Class II aaRS and biotin synthetases"/>
    <property type="match status" value="1"/>
</dbReference>
<dbReference type="SUPFAM" id="SSF101353">
    <property type="entry name" value="Putative anticodon-binding domain of alanyl-tRNA synthetase (AlaRS)"/>
    <property type="match status" value="1"/>
</dbReference>
<dbReference type="SUPFAM" id="SSF55186">
    <property type="entry name" value="ThrRS/AlaRS common domain"/>
    <property type="match status" value="1"/>
</dbReference>
<dbReference type="SUPFAM" id="SSF50447">
    <property type="entry name" value="Translation proteins"/>
    <property type="match status" value="1"/>
</dbReference>
<dbReference type="PROSITE" id="PS50860">
    <property type="entry name" value="AA_TRNA_LIGASE_II_ALA"/>
    <property type="match status" value="1"/>
</dbReference>
<name>SYA_NITOC</name>
<keyword id="KW-0030">Aminoacyl-tRNA synthetase</keyword>
<keyword id="KW-0067">ATP-binding</keyword>
<keyword id="KW-0963">Cytoplasm</keyword>
<keyword id="KW-0436">Ligase</keyword>
<keyword id="KW-0479">Metal-binding</keyword>
<keyword id="KW-0547">Nucleotide-binding</keyword>
<keyword id="KW-0648">Protein biosynthesis</keyword>
<keyword id="KW-1185">Reference proteome</keyword>
<keyword id="KW-0694">RNA-binding</keyword>
<keyword id="KW-0820">tRNA-binding</keyword>
<keyword id="KW-0862">Zinc</keyword>
<accession>Q3JCK8</accession>